<dbReference type="EMBL" id="AA277150">
    <property type="status" value="NOT_ANNOTATED_CDS"/>
    <property type="molecule type" value="mRNA"/>
</dbReference>
<dbReference type="CCDS" id="CCDS52042.1"/>
<dbReference type="RefSeq" id="NP_941015.2">
    <property type="nucleotide sequence ID" value="NM_198613.2"/>
</dbReference>
<dbReference type="PDB" id="2JKR">
    <property type="method" value="X-ray"/>
    <property type="resolution" value="2.98 A"/>
    <property type="chains" value="I/S=1-142"/>
</dbReference>
<dbReference type="PDB" id="2JKT">
    <property type="method" value="X-ray"/>
    <property type="resolution" value="3.40 A"/>
    <property type="chains" value="I/S=1-142"/>
</dbReference>
<dbReference type="PDB" id="2VGL">
    <property type="method" value="X-ray"/>
    <property type="resolution" value="2.59 A"/>
    <property type="chains" value="S=1-142"/>
</dbReference>
<dbReference type="PDB" id="2XA7">
    <property type="method" value="X-ray"/>
    <property type="resolution" value="3.10 A"/>
    <property type="chains" value="S=1-142"/>
</dbReference>
<dbReference type="PDB" id="4UQI">
    <property type="method" value="X-ray"/>
    <property type="resolution" value="2.79 A"/>
    <property type="chains" value="S=1-142"/>
</dbReference>
<dbReference type="PDB" id="6QH5">
    <property type="method" value="X-ray"/>
    <property type="resolution" value="2.56 A"/>
    <property type="chains" value="S=1-142"/>
</dbReference>
<dbReference type="PDB" id="6QH6">
    <property type="method" value="X-ray"/>
    <property type="resolution" value="5.00 A"/>
    <property type="chains" value="S=1-142"/>
</dbReference>
<dbReference type="PDB" id="6QH7">
    <property type="method" value="X-ray"/>
    <property type="resolution" value="3.40 A"/>
    <property type="chains" value="S=1-142"/>
</dbReference>
<dbReference type="PDB" id="6YAE">
    <property type="method" value="EM"/>
    <property type="resolution" value="3.90 A"/>
    <property type="chains" value="S=1-142"/>
</dbReference>
<dbReference type="PDB" id="6YAF">
    <property type="method" value="EM"/>
    <property type="resolution" value="9.10 A"/>
    <property type="chains" value="S=1-142"/>
</dbReference>
<dbReference type="PDB" id="6YAH">
    <property type="method" value="EM"/>
    <property type="resolution" value="10.20 A"/>
    <property type="chains" value="S=1-142"/>
</dbReference>
<dbReference type="PDB" id="7OG1">
    <property type="method" value="X-ray"/>
    <property type="resolution" value="3.25 A"/>
    <property type="chains" value="SSS=1-142"/>
</dbReference>
<dbReference type="PDB" id="7OHO">
    <property type="method" value="X-ray"/>
    <property type="resolution" value="2.88 A"/>
    <property type="chains" value="SSS=1-142"/>
</dbReference>
<dbReference type="PDB" id="7RW8">
    <property type="method" value="EM"/>
    <property type="resolution" value="3.50 A"/>
    <property type="chains" value="S=1-142"/>
</dbReference>
<dbReference type="PDB" id="7RW9">
    <property type="method" value="EM"/>
    <property type="resolution" value="3.90 A"/>
    <property type="chains" value="S=1-142"/>
</dbReference>
<dbReference type="PDB" id="7RWA">
    <property type="method" value="EM"/>
    <property type="resolution" value="4.70 A"/>
    <property type="chains" value="S/s=1-142"/>
</dbReference>
<dbReference type="PDB" id="7RWB">
    <property type="method" value="EM"/>
    <property type="resolution" value="3.90 A"/>
    <property type="chains" value="S/s=1-142"/>
</dbReference>
<dbReference type="PDB" id="7RWC">
    <property type="method" value="EM"/>
    <property type="resolution" value="3.80 A"/>
    <property type="chains" value="S=1-142"/>
</dbReference>
<dbReference type="PDB" id="7Z5C">
    <property type="method" value="EM"/>
    <property type="resolution" value="4.16 A"/>
    <property type="chains" value="S=1-142"/>
</dbReference>
<dbReference type="PDB" id="8T1O">
    <property type="method" value="EM"/>
    <property type="resolution" value="3.30 A"/>
    <property type="chains" value="S=1-142"/>
</dbReference>
<dbReference type="PDBsum" id="2JKR"/>
<dbReference type="PDBsum" id="2JKT"/>
<dbReference type="PDBsum" id="2VGL"/>
<dbReference type="PDBsum" id="2XA7"/>
<dbReference type="PDBsum" id="4UQI"/>
<dbReference type="PDBsum" id="6QH5"/>
<dbReference type="PDBsum" id="6QH6"/>
<dbReference type="PDBsum" id="6QH7"/>
<dbReference type="PDBsum" id="6YAE"/>
<dbReference type="PDBsum" id="6YAF"/>
<dbReference type="PDBsum" id="6YAH"/>
<dbReference type="PDBsum" id="7OG1"/>
<dbReference type="PDBsum" id="7OHO"/>
<dbReference type="PDBsum" id="7RW8"/>
<dbReference type="PDBsum" id="7RW9"/>
<dbReference type="PDBsum" id="7RWA"/>
<dbReference type="PDBsum" id="7RWB"/>
<dbReference type="PDBsum" id="7RWC"/>
<dbReference type="PDBsum" id="7Z5C"/>
<dbReference type="PDBsum" id="8T1O"/>
<dbReference type="EMDB" id="EMD-10747"/>
<dbReference type="EMDB" id="EMD-10748"/>
<dbReference type="EMDB" id="EMD-10751"/>
<dbReference type="EMDB" id="EMD-14517"/>
<dbReference type="EMDB" id="EMD-14525"/>
<dbReference type="EMDB" id="EMD-14526"/>
<dbReference type="EMDB" id="EMD-24710"/>
<dbReference type="EMDB" id="EMD-24711"/>
<dbReference type="EMDB" id="EMD-24712"/>
<dbReference type="EMDB" id="EMD-24713"/>
<dbReference type="EMDB" id="EMD-24714"/>
<dbReference type="EMDB" id="EMD-40034"/>
<dbReference type="EMDB" id="EMD-40035"/>
<dbReference type="EMDB" id="EMD-40973"/>
<dbReference type="SMR" id="P62743"/>
<dbReference type="BioGRID" id="231318">
    <property type="interactions" value="36"/>
</dbReference>
<dbReference type="ComplexPortal" id="CPX-5152">
    <property type="entry name" value="AP-2 Adaptor complex, alpha1 variant"/>
</dbReference>
<dbReference type="ComplexPortal" id="CPX-5153">
    <property type="entry name" value="AP-2 Adaptor complex, alpha2 variant"/>
</dbReference>
<dbReference type="CORUM" id="P62743"/>
<dbReference type="DIP" id="DIP-37505N"/>
<dbReference type="FunCoup" id="P62743">
    <property type="interactions" value="2178"/>
</dbReference>
<dbReference type="IntAct" id="P62743">
    <property type="interactions" value="5"/>
</dbReference>
<dbReference type="MINT" id="P62743"/>
<dbReference type="STRING" id="10090.ENSMUSP00000083281"/>
<dbReference type="GlyGen" id="P62743">
    <property type="glycosylation" value="1 site, 1 O-linked glycan (1 site)"/>
</dbReference>
<dbReference type="iPTMnet" id="P62743"/>
<dbReference type="PhosphoSitePlus" id="P62743"/>
<dbReference type="SwissPalm" id="P62743"/>
<dbReference type="jPOST" id="P62743"/>
<dbReference type="PaxDb" id="10090-ENSMUSP00000083281"/>
<dbReference type="PeptideAtlas" id="P62743"/>
<dbReference type="ProteomicsDB" id="296358"/>
<dbReference type="Pumba" id="P62743"/>
<dbReference type="Antibodypedia" id="31506">
    <property type="antibodies" value="171 antibodies from 26 providers"/>
</dbReference>
<dbReference type="DNASU" id="232910"/>
<dbReference type="Ensembl" id="ENSMUST00000086112.8">
    <property type="protein sequence ID" value="ENSMUSP00000083281.7"/>
    <property type="gene ID" value="ENSMUSG00000008036.12"/>
</dbReference>
<dbReference type="GeneID" id="232910"/>
<dbReference type="KEGG" id="mmu:232910"/>
<dbReference type="UCSC" id="uc012faj.1">
    <property type="organism name" value="mouse"/>
</dbReference>
<dbReference type="AGR" id="MGI:2141861"/>
<dbReference type="CTD" id="1175"/>
<dbReference type="MGI" id="MGI:2141861">
    <property type="gene designation" value="Ap2s1"/>
</dbReference>
<dbReference type="VEuPathDB" id="HostDB:ENSMUSG00000008036"/>
<dbReference type="eggNOG" id="KOG0935">
    <property type="taxonomic scope" value="Eukaryota"/>
</dbReference>
<dbReference type="GeneTree" id="ENSGT00970000193421"/>
<dbReference type="HOGENOM" id="CLU_061221_3_1_1"/>
<dbReference type="InParanoid" id="P62743"/>
<dbReference type="OMA" id="QSNFVEY"/>
<dbReference type="OrthoDB" id="371463at2759"/>
<dbReference type="PhylomeDB" id="P62743"/>
<dbReference type="TreeFam" id="TF300139"/>
<dbReference type="Reactome" id="R-MMU-177504">
    <property type="pathway name" value="Retrograde neurotrophin signalling"/>
</dbReference>
<dbReference type="Reactome" id="R-MMU-2132295">
    <property type="pathway name" value="MHC class II antigen presentation"/>
</dbReference>
<dbReference type="Reactome" id="R-MMU-416993">
    <property type="pathway name" value="Trafficking of GluR2-containing AMPA receptors"/>
</dbReference>
<dbReference type="Reactome" id="R-MMU-437239">
    <property type="pathway name" value="Recycling pathway of L1"/>
</dbReference>
<dbReference type="Reactome" id="R-MMU-5099900">
    <property type="pathway name" value="WNT5A-dependent internalization of FZD4"/>
</dbReference>
<dbReference type="Reactome" id="R-MMU-5140745">
    <property type="pathway name" value="WNT5A-dependent internalization of FZD2, FZD5 and ROR2"/>
</dbReference>
<dbReference type="Reactome" id="R-MMU-8856825">
    <property type="pathway name" value="Cargo recognition for clathrin-mediated endocytosis"/>
</dbReference>
<dbReference type="Reactome" id="R-MMU-8856828">
    <property type="pathway name" value="Clathrin-mediated endocytosis"/>
</dbReference>
<dbReference type="Reactome" id="R-MMU-8866427">
    <property type="pathway name" value="VLDLR internalisation and degradation"/>
</dbReference>
<dbReference type="Reactome" id="R-MMU-8964038">
    <property type="pathway name" value="LDL clearance"/>
</dbReference>
<dbReference type="BioGRID-ORCS" id="232910">
    <property type="hits" value="30 hits in 82 CRISPR screens"/>
</dbReference>
<dbReference type="CD-CODE" id="CE726F99">
    <property type="entry name" value="Postsynaptic density"/>
</dbReference>
<dbReference type="ChiTaRS" id="Ap2s1">
    <property type="organism name" value="mouse"/>
</dbReference>
<dbReference type="EvolutionaryTrace" id="P62743"/>
<dbReference type="PRO" id="PR:P62743"/>
<dbReference type="Proteomes" id="UP000000589">
    <property type="component" value="Chromosome 7"/>
</dbReference>
<dbReference type="RNAct" id="P62743">
    <property type="molecule type" value="protein"/>
</dbReference>
<dbReference type="Bgee" id="ENSMUSG00000008036">
    <property type="expression patterns" value="Expressed in cortical plate and 245 other cell types or tissues"/>
</dbReference>
<dbReference type="ExpressionAtlas" id="P62743">
    <property type="expression patterns" value="baseline and differential"/>
</dbReference>
<dbReference type="GO" id="GO:0030122">
    <property type="term" value="C:AP-2 adaptor complex"/>
    <property type="evidence" value="ECO:0000314"/>
    <property type="project" value="CAFA"/>
</dbReference>
<dbReference type="GO" id="GO:0009898">
    <property type="term" value="C:cytoplasmic side of plasma membrane"/>
    <property type="evidence" value="ECO:0000303"/>
    <property type="project" value="ComplexPortal"/>
</dbReference>
<dbReference type="GO" id="GO:0098794">
    <property type="term" value="C:postsynapse"/>
    <property type="evidence" value="ECO:0007669"/>
    <property type="project" value="GOC"/>
</dbReference>
<dbReference type="GO" id="GO:0098793">
    <property type="term" value="C:presynapse"/>
    <property type="evidence" value="ECO:0007669"/>
    <property type="project" value="GOC"/>
</dbReference>
<dbReference type="GO" id="GO:0045202">
    <property type="term" value="C:synapse"/>
    <property type="evidence" value="ECO:0000314"/>
    <property type="project" value="SynGO"/>
</dbReference>
<dbReference type="GO" id="GO:0035615">
    <property type="term" value="F:clathrin adaptor activity"/>
    <property type="evidence" value="ECO:0007669"/>
    <property type="project" value="InterPro"/>
</dbReference>
<dbReference type="GO" id="GO:0072583">
    <property type="term" value="P:clathrin-dependent endocytosis"/>
    <property type="evidence" value="ECO:0000303"/>
    <property type="project" value="ComplexPortal"/>
</dbReference>
<dbReference type="GO" id="GO:0006886">
    <property type="term" value="P:intracellular protein transport"/>
    <property type="evidence" value="ECO:0007669"/>
    <property type="project" value="InterPro"/>
</dbReference>
<dbReference type="GO" id="GO:0098884">
    <property type="term" value="P:postsynaptic neurotransmitter receptor internalization"/>
    <property type="evidence" value="ECO:0000303"/>
    <property type="project" value="ComplexPortal"/>
</dbReference>
<dbReference type="GO" id="GO:0048488">
    <property type="term" value="P:synaptic vesicle endocytosis"/>
    <property type="evidence" value="ECO:0007669"/>
    <property type="project" value="Ensembl"/>
</dbReference>
<dbReference type="GO" id="GO:0016192">
    <property type="term" value="P:vesicle-mediated transport"/>
    <property type="evidence" value="ECO:0000303"/>
    <property type="project" value="ComplexPortal"/>
</dbReference>
<dbReference type="CDD" id="cd14833">
    <property type="entry name" value="AP2_sigma"/>
    <property type="match status" value="1"/>
</dbReference>
<dbReference type="FunFam" id="3.30.450.60:FF:000004">
    <property type="entry name" value="AP complex subunit sigma"/>
    <property type="match status" value="1"/>
</dbReference>
<dbReference type="Gene3D" id="3.30.450.60">
    <property type="match status" value="1"/>
</dbReference>
<dbReference type="IDEAL" id="IID50124"/>
<dbReference type="InterPro" id="IPR016635">
    <property type="entry name" value="AP_complex_ssu"/>
</dbReference>
<dbReference type="InterPro" id="IPR022775">
    <property type="entry name" value="AP_mu_sigma_su"/>
</dbReference>
<dbReference type="InterPro" id="IPR027156">
    <property type="entry name" value="APS2"/>
</dbReference>
<dbReference type="InterPro" id="IPR000804">
    <property type="entry name" value="Clathrin_sm-chain_CS"/>
</dbReference>
<dbReference type="InterPro" id="IPR011012">
    <property type="entry name" value="Longin-like_dom_sf"/>
</dbReference>
<dbReference type="PANTHER" id="PTHR11753">
    <property type="entry name" value="ADAPTOR COMPLEXES SMALL SUBUNIT FAMILY"/>
    <property type="match status" value="1"/>
</dbReference>
<dbReference type="Pfam" id="PF01217">
    <property type="entry name" value="Clat_adaptor_s"/>
    <property type="match status" value="1"/>
</dbReference>
<dbReference type="PIRSF" id="PIRSF015588">
    <property type="entry name" value="AP_complex_sigma"/>
    <property type="match status" value="1"/>
</dbReference>
<dbReference type="SUPFAM" id="SSF64356">
    <property type="entry name" value="SNARE-like"/>
    <property type="match status" value="1"/>
</dbReference>
<dbReference type="PROSITE" id="PS00989">
    <property type="entry name" value="CLAT_ADAPTOR_S"/>
    <property type="match status" value="1"/>
</dbReference>
<evidence type="ECO:0000250" key="1"/>
<evidence type="ECO:0000250" key="2">
    <source>
        <dbReference type="UniProtKB" id="P53680"/>
    </source>
</evidence>
<evidence type="ECO:0000250" key="3">
    <source>
        <dbReference type="UniProtKB" id="P63010"/>
    </source>
</evidence>
<evidence type="ECO:0000269" key="4">
    <source>
    </source>
</evidence>
<evidence type="ECO:0000269" key="5">
    <source>
    </source>
</evidence>
<evidence type="ECO:0000269" key="6">
    <source>
    </source>
</evidence>
<evidence type="ECO:0000269" key="7">
    <source>
    </source>
</evidence>
<evidence type="ECO:0000305" key="8"/>
<evidence type="ECO:0007829" key="9">
    <source>
        <dbReference type="PDB" id="2JKR"/>
    </source>
</evidence>
<evidence type="ECO:0007829" key="10">
    <source>
        <dbReference type="PDB" id="2XA7"/>
    </source>
</evidence>
<evidence type="ECO:0007829" key="11">
    <source>
        <dbReference type="PDB" id="6QH5"/>
    </source>
</evidence>
<feature type="chain" id="PRO_0000193805" description="AP-2 complex subunit sigma">
    <location>
        <begin position="1"/>
        <end position="142"/>
    </location>
</feature>
<feature type="modified residue" description="Phosphoserine" evidence="2">
    <location>
        <position position="140"/>
    </location>
</feature>
<feature type="mutagenesis site" description="Reduces interaction with CD4 endocytosis signal motif; when associated with AP2A2 E-21." evidence="7">
    <original>R</original>
    <variation>S</variation>
    <location>
        <position position="15"/>
    </location>
</feature>
<feature type="mutagenesis site" description="Abolishes interaction with CD4 endocytosis signal motif." evidence="7">
    <original>Y</original>
    <variation>S</variation>
    <location>
        <position position="62"/>
    </location>
</feature>
<feature type="mutagenesis site" description="Abolishes interaction with CD4 endocytosis signal motif." evidence="7">
    <original>A</original>
    <variation>W</variation>
    <location>
        <position position="63"/>
    </location>
</feature>
<feature type="mutagenesis site" description="Slightly reduces interaction with CD4 endocytosis signal motif." evidence="7">
    <original>L</original>
    <variation>S</variation>
    <location>
        <position position="65"/>
    </location>
</feature>
<feature type="mutagenesis site" description="Abolishes interaction with CD4 endocytosis signal motif." evidence="7">
    <original>V</original>
    <variation>D</variation>
    <location>
        <position position="88"/>
    </location>
</feature>
<feature type="mutagenesis site" description="Abolishes interaction with CD4 endocytosis signal motif." evidence="7">
    <original>N</original>
    <variation>W</variation>
    <location>
        <position position="92"/>
    </location>
</feature>
<feature type="mutagenesis site" description="Reduces interaction with CD4 endocytosis signal motif." evidence="7">
    <original>V</original>
    <variation>F</variation>
    <location>
        <position position="98"/>
    </location>
</feature>
<feature type="mutagenesis site" description="Abolishes interaction with CD4 endocytosis signal motif." evidence="7">
    <original>V</original>
    <variation>S</variation>
    <location>
        <position position="98"/>
    </location>
</feature>
<feature type="mutagenesis site" description="Abolishes interaction with CD4 endocytosis signal motif." evidence="7">
    <original>E</original>
    <variation>Y</variation>
    <location>
        <position position="100"/>
    </location>
</feature>
<feature type="mutagenesis site" description="Abolishes interaction with CD4 endocytosis signal motif." evidence="7">
    <original>L</original>
    <variation>S</variation>
    <location>
        <position position="103"/>
    </location>
</feature>
<feature type="strand" evidence="11">
    <location>
        <begin position="2"/>
        <end position="9"/>
    </location>
</feature>
<feature type="strand" evidence="11">
    <location>
        <begin position="14"/>
        <end position="21"/>
    </location>
</feature>
<feature type="helix" evidence="11">
    <location>
        <begin position="25"/>
        <end position="39"/>
    </location>
</feature>
<feature type="strand" evidence="9">
    <location>
        <begin position="44"/>
        <end position="46"/>
    </location>
</feature>
<feature type="strand" evidence="11">
    <location>
        <begin position="48"/>
        <end position="52"/>
    </location>
</feature>
<feature type="strand" evidence="11">
    <location>
        <begin position="55"/>
        <end position="62"/>
    </location>
</feature>
<feature type="strand" evidence="11">
    <location>
        <begin position="65"/>
        <end position="71"/>
    </location>
</feature>
<feature type="strand" evidence="10">
    <location>
        <begin position="73"/>
        <end position="75"/>
    </location>
</feature>
<feature type="helix" evidence="11">
    <location>
        <begin position="77"/>
        <end position="94"/>
    </location>
</feature>
<feature type="helix" evidence="11">
    <location>
        <begin position="100"/>
        <end position="105"/>
    </location>
</feature>
<feature type="helix" evidence="11">
    <location>
        <begin position="107"/>
        <end position="117"/>
    </location>
</feature>
<feature type="helix" evidence="11">
    <location>
        <begin position="128"/>
        <end position="140"/>
    </location>
</feature>
<name>AP2S1_MOUSE</name>
<protein>
    <recommendedName>
        <fullName>AP-2 complex subunit sigma</fullName>
    </recommendedName>
    <alternativeName>
        <fullName>Adaptor protein complex AP-2 subunit sigma</fullName>
    </alternativeName>
    <alternativeName>
        <fullName>Adaptor-related protein complex 2 subunit sigma</fullName>
    </alternativeName>
    <alternativeName>
        <fullName>Clathrin assembly protein 2 sigma small chain</fullName>
    </alternativeName>
    <alternativeName>
        <fullName>Clathrin coat assembly protein AP17</fullName>
    </alternativeName>
    <alternativeName>
        <fullName>Clathrin coat-associated protein AP17</fullName>
    </alternativeName>
    <alternativeName>
        <fullName>Plasma membrane adaptor AP-2 17 kDa protein</fullName>
    </alternativeName>
    <alternativeName>
        <fullName>Sigma-adaptin 3b</fullName>
    </alternativeName>
    <alternativeName>
        <fullName>Sigma2-adaptin</fullName>
    </alternativeName>
</protein>
<accession>P62743</accession>
<accession>P70626</accession>
<accession>P97626</accession>
<accession>Q00380</accession>
<sequence>MIRFILIQNRAGKTRLAKWYMQFDDDEKQKLIEEVHAVVTVRDAKHTNFVEFRNFKIIYRRYAGLYFCICVDVNDNNLAYLEAIHNFVEVLNEYFHNVCELDLVFNFYKVYTVVDEMFLAGEIRETSQTKVLKQLLMLQSLE</sequence>
<reference key="1">
    <citation type="submission" date="1997-04" db="EMBL/GenBank/DDBJ databases">
        <authorList>
            <person name="Marra M."/>
            <person name="Hillier L."/>
            <person name="Allen M."/>
            <person name="Bowles M."/>
            <person name="Dietrich N."/>
            <person name="Dubuque T."/>
            <person name="Geisel S."/>
            <person name="Kucaba T."/>
            <person name="Lacy M."/>
            <person name="Le M."/>
            <person name="Martin J."/>
            <person name="Morris M."/>
            <person name="Schellenberg K."/>
            <person name="Steptoe M."/>
            <person name="Tan F."/>
            <person name="Underwood K."/>
            <person name="Moore B."/>
            <person name="Theising B."/>
            <person name="Wylie T."/>
            <person name="Lennon G."/>
            <person name="Soares B."/>
            <person name="Wilson R."/>
            <person name="Waterston R."/>
        </authorList>
    </citation>
    <scope>NUCLEOTIDE SEQUENCE [MRNA]</scope>
</reference>
<reference key="2">
    <citation type="journal article" date="2003" name="Cell Struct. Funct.">
        <title>Adaptor protein complexes as the key regulators of protein sorting in the post-Golgi network.</title>
        <authorList>
            <person name="Nakatsu F."/>
            <person name="Ohno H."/>
        </authorList>
    </citation>
    <scope>FUNCTION OF THE AP-2 COMPLEX IN CLATHRIN-MEDIATED ENDOCYTOSIS</scope>
</reference>
<reference key="3">
    <citation type="journal article" date="2004" name="Annu. Rev. Cell Dev. Biol.">
        <title>Adaptors for clathrin coats: structure and function.</title>
        <authorList>
            <person name="Owen D.J."/>
            <person name="Collins B.M."/>
            <person name="Evans P.R."/>
        </authorList>
    </citation>
    <scope>FUNCTION OF THE AP-2 COMPLEX IN CLATHRIN-MEDIATED ENDOCYTOSIS</scope>
</reference>
<reference key="4">
    <citation type="journal article" date="2010" name="Cell">
        <title>A tissue-specific atlas of mouse protein phosphorylation and expression.</title>
        <authorList>
            <person name="Huttlin E.L."/>
            <person name="Jedrychowski M.P."/>
            <person name="Elias J.E."/>
            <person name="Goswami T."/>
            <person name="Rad R."/>
            <person name="Beausoleil S.A."/>
            <person name="Villen J."/>
            <person name="Haas W."/>
            <person name="Sowa M.E."/>
            <person name="Gygi S.P."/>
        </authorList>
    </citation>
    <scope>IDENTIFICATION BY MASS SPECTROMETRY [LARGE SCALE ANALYSIS]</scope>
    <source>
        <tissue>Brain</tissue>
        <tissue>Brown adipose tissue</tissue>
        <tissue>Heart</tissue>
        <tissue>Kidney</tissue>
        <tissue>Liver</tissue>
        <tissue>Lung</tissue>
        <tissue>Pancreas</tissue>
        <tissue>Spleen</tissue>
        <tissue>Testis</tissue>
    </source>
</reference>
<reference key="5">
    <citation type="journal article" date="2002" name="Cell">
        <title>Molecular architecture and functional model of the endocytic AP2 complex.</title>
        <authorList>
            <person name="Collins B.M."/>
            <person name="McCoy A.J."/>
            <person name="Kent H.M."/>
            <person name="Evans P.R."/>
            <person name="Owen D.J."/>
        </authorList>
    </citation>
    <scope>X-RAY CRYSTALLOGRAPHY (2.59 ANGSTROMS) IN COMPLEX WITH AP2B1; AP2M1; AP2A2 AND AN INOSITOL POLYPHOSPHATE HEADGROUP</scope>
</reference>
<reference key="6">
    <citation type="journal article" date="2008" name="Nature">
        <title>A structural explanation for the binding of endocytic dileucine motifs by the AP2 complex.</title>
        <authorList>
            <person name="Kelly B.T."/>
            <person name="McCoy A.J."/>
            <person name="Spaete K."/>
            <person name="Miller S.E."/>
            <person name="Evans P.R."/>
            <person name="Hoening S."/>
            <person name="Owen D.J."/>
        </authorList>
    </citation>
    <scope>X-RAY CRYSTALLOGRAPHY (2.98 ANGSTROMS) IN COMPLEX WITH AP2A2; AP2B1; AP2M1 AND CD4 INTERNALIZATION SIGNAL</scope>
    <scope>MUTAGENESIS OF ARG-15; TYR-62; ALA-63; LEU-65; VAL-88; ASN-92; VAL-98; GLU-100 AND LEU-103</scope>
</reference>
<gene>
    <name type="primary">Ap2s1</name>
    <name type="synonym">Ap17</name>
    <name type="synonym">Claps2</name>
</gene>
<comment type="function">
    <text evidence="1 5 6">Component of the adaptor protein complex 2 (AP-2). Adaptor protein complexes function in protein transport via Transport vesicles in different membrane traffic pathways. Adaptor protein complexes are vesicle coat components and appear to be involved in cargo selection and vesicle formation. AP-2 is involved in clathrin-dependent endocytosis in which cargo proteins are incorporated into vesicles surrounded by clathrin (clathrin-coated vesicles, CCVs) which are destined for fusion with the early endosome. The clathrin lattice serves as a mechanical scaffold but is itself unable to bind directly to membrane components. Clathrin-associated adaptor protein (AP) complexes which can bind directly to both the clathrin lattice and to the lipid and protein components of membranes are considered to be the major clathrin adaptors contributing the CCV formation. AP-2 also serves as a cargo receptor to selectively sort the membrane proteins involved in receptor-mediated endocytosis. AP-2 seems to play a role in the recycling of synaptic vesicle membranes from the presynaptic surface. AP-2 recognizes Y-X-X-[FILMV] (Y-X-X-Phi) and [ED]-X-X-X-L-[LI] endocytosis signal motifs within the cytosolic tails of transmembrane cargo molecules. AP-2 may also play a role in maintaining normal post-endocytic trafficking through the ARF6-regulated, non-clathrin pathway. The AP-2 alpha and AP-2 sigma subunits are thought to contribute to the recognition of the [ED]-X-X-X-L-[LI] motif. May also play a role in extracellular calcium homeostasis (By similarity).</text>
</comment>
<comment type="subunit">
    <text evidence="2 4 7">Adaptor protein complex 2 (AP-2) is a heterotetramer composed of two large adaptins (alpha-type subunit AP2A1 or AP2A2 and beta-type subunit AP2B1), a medium adaptin (mu-type subunit AP2M1) and a small adaptin (sigma-type subunit AP2S1). Interacts with CCDC32; the interaction is direct and mediates association of CCDC32 with adaptor protein complex 2 (AP-2) (By similarity).</text>
</comment>
<comment type="subcellular location">
    <subcellularLocation>
        <location evidence="3">Cell membrane</location>
    </subcellularLocation>
    <subcellularLocation>
        <location evidence="2">Membrane</location>
        <location evidence="2">Coated pit</location>
        <topology evidence="2">Peripheral membrane protein</topology>
        <orientation evidence="2">Cytoplasmic side</orientation>
    </subcellularLocation>
    <text evidence="3">AP-2 appears to be excluded from internalizing CCVs and to disengage from sites of endocytosis seconds before internalization of the nascent CCV.</text>
</comment>
<comment type="similarity">
    <text evidence="8">Belongs to the adaptor complexes small subunit family.</text>
</comment>
<proteinExistence type="evidence at protein level"/>
<organism>
    <name type="scientific">Mus musculus</name>
    <name type="common">Mouse</name>
    <dbReference type="NCBI Taxonomy" id="10090"/>
    <lineage>
        <taxon>Eukaryota</taxon>
        <taxon>Metazoa</taxon>
        <taxon>Chordata</taxon>
        <taxon>Craniata</taxon>
        <taxon>Vertebrata</taxon>
        <taxon>Euteleostomi</taxon>
        <taxon>Mammalia</taxon>
        <taxon>Eutheria</taxon>
        <taxon>Euarchontoglires</taxon>
        <taxon>Glires</taxon>
        <taxon>Rodentia</taxon>
        <taxon>Myomorpha</taxon>
        <taxon>Muroidea</taxon>
        <taxon>Muridae</taxon>
        <taxon>Murinae</taxon>
        <taxon>Mus</taxon>
        <taxon>Mus</taxon>
    </lineage>
</organism>
<keyword id="KW-0002">3D-structure</keyword>
<keyword id="KW-1003">Cell membrane</keyword>
<keyword id="KW-0168">Coated pit</keyword>
<keyword id="KW-0254">Endocytosis</keyword>
<keyword id="KW-0472">Membrane</keyword>
<keyword id="KW-0597">Phosphoprotein</keyword>
<keyword id="KW-0653">Protein transport</keyword>
<keyword id="KW-1185">Reference proteome</keyword>
<keyword id="KW-0813">Transport</keyword>